<organism>
    <name type="scientific">Arabidopsis thaliana</name>
    <name type="common">Mouse-ear cress</name>
    <dbReference type="NCBI Taxonomy" id="3702"/>
    <lineage>
        <taxon>Eukaryota</taxon>
        <taxon>Viridiplantae</taxon>
        <taxon>Streptophyta</taxon>
        <taxon>Embryophyta</taxon>
        <taxon>Tracheophyta</taxon>
        <taxon>Spermatophyta</taxon>
        <taxon>Magnoliopsida</taxon>
        <taxon>eudicotyledons</taxon>
        <taxon>Gunneridae</taxon>
        <taxon>Pentapetalae</taxon>
        <taxon>rosids</taxon>
        <taxon>malvids</taxon>
        <taxon>Brassicales</taxon>
        <taxon>Brassicaceae</taxon>
        <taxon>Camelineae</taxon>
        <taxon>Arabidopsis</taxon>
    </lineage>
</organism>
<comment type="subcellular location">
    <subcellularLocation>
        <location evidence="5">Secreted</location>
    </subcellularLocation>
</comment>
<comment type="similarity">
    <text evidence="4">Belongs to the plant self-incompatibility (S1) protein family.</text>
</comment>
<reference key="1">
    <citation type="journal article" date="1998" name="DNA Res.">
        <title>Structural analysis of Arabidopsis thaliana chromosome 5. VIII. Sequence features of the regions of 1,081,958 bp covered by seventeen physically assigned P1 and TAC clones.</title>
        <authorList>
            <person name="Asamizu E."/>
            <person name="Sato S."/>
            <person name="Kaneko T."/>
            <person name="Nakamura Y."/>
            <person name="Kotani H."/>
            <person name="Miyajima N."/>
            <person name="Tabata S."/>
        </authorList>
    </citation>
    <scope>NUCLEOTIDE SEQUENCE [LARGE SCALE GENOMIC DNA]</scope>
    <source>
        <strain>cv. Columbia</strain>
    </source>
</reference>
<reference key="2">
    <citation type="journal article" date="2017" name="Plant J.">
        <title>Araport11: a complete reannotation of the Arabidopsis thaliana reference genome.</title>
        <authorList>
            <person name="Cheng C.Y."/>
            <person name="Krishnakumar V."/>
            <person name="Chan A.P."/>
            <person name="Thibaud-Nissen F."/>
            <person name="Schobel S."/>
            <person name="Town C.D."/>
        </authorList>
    </citation>
    <scope>GENOME REANNOTATION</scope>
    <source>
        <strain>cv. Columbia</strain>
    </source>
</reference>
<reference key="3">
    <citation type="journal article" date="2005" name="Plant Physiol.">
        <title>Analysis of the cDNAs of hypothetical genes on Arabidopsis chromosome 2 reveals numerous transcript variants.</title>
        <authorList>
            <person name="Xiao Y.-L."/>
            <person name="Smith S.R."/>
            <person name="Ishmael N."/>
            <person name="Redman J.C."/>
            <person name="Kumar N."/>
            <person name="Monaghan E.L."/>
            <person name="Ayele M."/>
            <person name="Haas B.J."/>
            <person name="Wu H.C."/>
            <person name="Town C.D."/>
        </authorList>
    </citation>
    <scope>NUCLEOTIDE SEQUENCE [LARGE SCALE MRNA]</scope>
    <source>
        <strain>cv. Columbia</strain>
    </source>
</reference>
<reference key="4">
    <citation type="journal article" date="1999" name="Plant Mol. Biol.">
        <title>Analysis of Arabidopsis genome sequence reveals a large new gene family in plants.</title>
        <authorList>
            <person name="Ride J.P."/>
            <person name="Davies E.M."/>
            <person name="Franklin F.C.H."/>
            <person name="Marshall D.F."/>
        </authorList>
    </citation>
    <scope>GENE FAMILY</scope>
    <scope>NOMENCLATURE</scope>
    <source>
        <strain>cv. Columbia</strain>
    </source>
</reference>
<dbReference type="EMBL" id="AB016877">
    <property type="protein sequence ID" value="BAB11641.1"/>
    <property type="molecule type" value="Genomic_DNA"/>
</dbReference>
<dbReference type="EMBL" id="CP002688">
    <property type="status" value="NOT_ANNOTATED_CDS"/>
    <property type="molecule type" value="Genomic_DNA"/>
</dbReference>
<dbReference type="EMBL" id="ES012530">
    <property type="status" value="NOT_ANNOTATED_CDS"/>
    <property type="molecule type" value="mRNA"/>
</dbReference>
<dbReference type="EMBL" id="EG514668">
    <property type="status" value="NOT_ANNOTATED_CDS"/>
    <property type="molecule type" value="mRNA"/>
</dbReference>
<dbReference type="SMR" id="Q9FIV3"/>
<dbReference type="STRING" id="3702.Q9FIV3"/>
<dbReference type="GlyCosmos" id="Q9FIV3">
    <property type="glycosylation" value="2 sites, No reported glycans"/>
</dbReference>
<dbReference type="GlyGen" id="Q9FIV3">
    <property type="glycosylation" value="2 sites"/>
</dbReference>
<dbReference type="Araport" id="AT5G36985"/>
<dbReference type="TAIR" id="AT5G36985"/>
<dbReference type="InParanoid" id="Q9FIV3"/>
<dbReference type="PRO" id="PR:Q9FIV3"/>
<dbReference type="Proteomes" id="UP000006548">
    <property type="component" value="Chromosome 5"/>
</dbReference>
<dbReference type="ExpressionAtlas" id="Q9FIV3">
    <property type="expression patterns" value="baseline and differential"/>
</dbReference>
<dbReference type="GO" id="GO:0005576">
    <property type="term" value="C:extracellular region"/>
    <property type="evidence" value="ECO:0007669"/>
    <property type="project" value="UniProtKB-SubCell"/>
</dbReference>
<dbReference type="GO" id="GO:0060320">
    <property type="term" value="P:rejection of self pollen"/>
    <property type="evidence" value="ECO:0007669"/>
    <property type="project" value="UniProtKB-KW"/>
</dbReference>
<dbReference type="InterPro" id="IPR010264">
    <property type="entry name" value="Self-incomp_S1"/>
</dbReference>
<dbReference type="PANTHER" id="PTHR31232">
    <property type="match status" value="1"/>
</dbReference>
<dbReference type="PANTHER" id="PTHR31232:SF113">
    <property type="entry name" value="S-PROTEIN HOMOLOG-RELATED"/>
    <property type="match status" value="1"/>
</dbReference>
<dbReference type="Pfam" id="PF05938">
    <property type="entry name" value="Self-incomp_S1"/>
    <property type="match status" value="1"/>
</dbReference>
<protein>
    <recommendedName>
        <fullName evidence="3">S-protein homolog 25</fullName>
    </recommendedName>
</protein>
<sequence>MNHSVFVILITITYFGLNQACIKNIVEILNQLAPGQILEYHCRSEDDNLGVKQLNFNATPFVIRFHDEIPNLTRWNCIFRQGPNNSYSYDIEVYKAGPRLIPRCGQLRVWAARIDGIYFARKYNTPLVRVLSWNKN</sequence>
<evidence type="ECO:0000255" key="1"/>
<evidence type="ECO:0000255" key="2">
    <source>
        <dbReference type="PROSITE-ProRule" id="PRU00498"/>
    </source>
</evidence>
<evidence type="ECO:0000303" key="3">
    <source>
    </source>
</evidence>
<evidence type="ECO:0000305" key="4"/>
<evidence type="ECO:0000305" key="5">
    <source>
    </source>
</evidence>
<evidence type="ECO:0000312" key="6">
    <source>
        <dbReference type="EMBL" id="BAB11641.1"/>
    </source>
</evidence>
<gene>
    <name evidence="3" type="primary">SPH25</name>
    <name evidence="4" type="ordered locus">At5g36985</name>
    <name evidence="6" type="ORF">MLF18.17</name>
</gene>
<feature type="signal peptide" evidence="1">
    <location>
        <begin position="1"/>
        <end position="20"/>
    </location>
</feature>
<feature type="chain" id="PRO_5004329291" description="S-protein homolog 25">
    <location>
        <begin position="21"/>
        <end position="136"/>
    </location>
</feature>
<feature type="glycosylation site" description="N-linked (GlcNAc...) asparagine" evidence="2">
    <location>
        <position position="71"/>
    </location>
</feature>
<feature type="glycosylation site" description="N-linked (GlcNAc...) asparagine" evidence="2">
    <location>
        <position position="84"/>
    </location>
</feature>
<name>SPH25_ARATH</name>
<accession>Q9FIV3</accession>
<keyword id="KW-0325">Glycoprotein</keyword>
<keyword id="KW-1185">Reference proteome</keyword>
<keyword id="KW-0964">Secreted</keyword>
<keyword id="KW-0713">Self-incompatibility</keyword>
<keyword id="KW-0732">Signal</keyword>
<proteinExistence type="evidence at transcript level"/>